<dbReference type="EMBL" id="L10328">
    <property type="protein sequence ID" value="AAA62035.1"/>
    <property type="status" value="ALT_INIT"/>
    <property type="molecule type" value="Genomic_DNA"/>
</dbReference>
<dbReference type="EMBL" id="U00096">
    <property type="protein sequence ID" value="AYC08253.1"/>
    <property type="molecule type" value="Genomic_DNA"/>
</dbReference>
<dbReference type="EMBL" id="AP009048">
    <property type="protein sequence ID" value="BAE77611.1"/>
    <property type="molecule type" value="Genomic_DNA"/>
</dbReference>
<dbReference type="PIR" id="D65170">
    <property type="entry name" value="D65170"/>
</dbReference>
<dbReference type="SMR" id="P31452"/>
<dbReference type="BioGRID" id="4260807">
    <property type="interactions" value="9"/>
</dbReference>
<dbReference type="FunCoup" id="P31452">
    <property type="interactions" value="129"/>
</dbReference>
<dbReference type="EnsemblBacteria" id="AYC08253">
    <property type="protein sequence ID" value="AYC08253"/>
    <property type="gene ID" value="b3683"/>
</dbReference>
<dbReference type="KEGG" id="ecj:JW3660"/>
<dbReference type="KEGG" id="ecoc:C3026_19970"/>
<dbReference type="PATRIC" id="fig|83333.103.peg.4618"/>
<dbReference type="EchoBASE" id="EB1661"/>
<dbReference type="eggNOG" id="COG1263">
    <property type="taxonomic scope" value="Bacteria"/>
</dbReference>
<dbReference type="HOGENOM" id="CLU_012312_1_0_6"/>
<dbReference type="InParanoid" id="P31452"/>
<dbReference type="PhylomeDB" id="P31452"/>
<dbReference type="BioCyc" id="EcoCyc:GLVC-MONOMER"/>
<dbReference type="PRO" id="PR:P31452"/>
<dbReference type="Proteomes" id="UP000000625">
    <property type="component" value="Chromosome"/>
</dbReference>
<dbReference type="GO" id="GO:0005886">
    <property type="term" value="C:plasma membrane"/>
    <property type="evidence" value="ECO:0000314"/>
    <property type="project" value="EcoCyc"/>
</dbReference>
<dbReference type="GO" id="GO:0008982">
    <property type="term" value="F:protein-N(PI)-phosphohistidine-sugar phosphotransferase activity"/>
    <property type="evidence" value="ECO:0007669"/>
    <property type="project" value="InterPro"/>
</dbReference>
<dbReference type="GO" id="GO:0090563">
    <property type="term" value="F:protein-phosphocysteine-sugar phosphotransferase activity"/>
    <property type="evidence" value="ECO:0000318"/>
    <property type="project" value="GO_Central"/>
</dbReference>
<dbReference type="GO" id="GO:0008643">
    <property type="term" value="P:carbohydrate transport"/>
    <property type="evidence" value="ECO:0000304"/>
    <property type="project" value="EcoliWiki"/>
</dbReference>
<dbReference type="GO" id="GO:0009401">
    <property type="term" value="P:phosphoenolpyruvate-dependent sugar phosphotransferase system"/>
    <property type="evidence" value="ECO:0000318"/>
    <property type="project" value="GO_Central"/>
</dbReference>
<dbReference type="InterPro" id="IPR003352">
    <property type="entry name" value="PTS_EIIC"/>
</dbReference>
<dbReference type="InterPro" id="IPR013013">
    <property type="entry name" value="PTS_EIIC_1"/>
</dbReference>
<dbReference type="InterPro" id="IPR050429">
    <property type="entry name" value="PTS_Glucose_EIICBA"/>
</dbReference>
<dbReference type="InterPro" id="IPR010975">
    <property type="entry name" value="PTS_IIBC_a_glc"/>
</dbReference>
<dbReference type="InterPro" id="IPR004719">
    <property type="entry name" value="PTS_maltose/Glc_sub_IIC"/>
</dbReference>
<dbReference type="NCBIfam" id="TIGR00852">
    <property type="entry name" value="pts-Glc"/>
    <property type="match status" value="1"/>
</dbReference>
<dbReference type="NCBIfam" id="TIGR02005">
    <property type="entry name" value="PTS-IIBC-alpha"/>
    <property type="match status" value="1"/>
</dbReference>
<dbReference type="PANTHER" id="PTHR30009">
    <property type="entry name" value="CYTOCHROME C-TYPE SYNTHESIS PROTEIN AND PTS TRANSMEMBRANE COMPONENT"/>
    <property type="match status" value="1"/>
</dbReference>
<dbReference type="PANTHER" id="PTHR30009:SF12">
    <property type="entry name" value="PHOSPHOTRANSFERASE IIC COMPONENT GLVC"/>
    <property type="match status" value="1"/>
</dbReference>
<dbReference type="Pfam" id="PF02378">
    <property type="entry name" value="PTS_EIIC"/>
    <property type="match status" value="1"/>
</dbReference>
<dbReference type="PROSITE" id="PS51103">
    <property type="entry name" value="PTS_EIIC_TYPE_1"/>
    <property type="match status" value="1"/>
</dbReference>
<feature type="chain" id="PRO_0000186579" description="Phosphotransferase IIC component GlvC">
    <location>
        <begin position="1"/>
        <end position="368"/>
    </location>
</feature>
<feature type="topological domain" description="Periplasmic" evidence="2">
    <location>
        <begin position="1"/>
        <end position="11"/>
    </location>
</feature>
<feature type="transmembrane region" description="Helical" evidence="3">
    <location>
        <begin position="12"/>
        <end position="32"/>
    </location>
</feature>
<feature type="topological domain" description="Cytoplasmic" evidence="2">
    <location>
        <begin position="33"/>
        <end position="59"/>
    </location>
</feature>
<feature type="transmembrane region" description="Helical" evidence="3">
    <location>
        <begin position="60"/>
        <end position="80"/>
    </location>
</feature>
<feature type="topological domain" description="Periplasmic" evidence="2">
    <location>
        <begin position="81"/>
        <end position="86"/>
    </location>
</feature>
<feature type="transmembrane region" description="Helical" evidence="3">
    <location>
        <begin position="87"/>
        <end position="107"/>
    </location>
</feature>
<feature type="topological domain" description="Cytoplasmic" evidence="2">
    <location>
        <begin position="108"/>
        <end position="129"/>
    </location>
</feature>
<feature type="transmembrane region" description="Helical" evidence="3">
    <location>
        <begin position="130"/>
        <end position="150"/>
    </location>
</feature>
<feature type="topological domain" description="Periplasmic" evidence="2">
    <location>
        <begin position="151"/>
        <end position="173"/>
    </location>
</feature>
<feature type="transmembrane region" description="Helical" evidence="3">
    <location>
        <begin position="174"/>
        <end position="194"/>
    </location>
</feature>
<feature type="topological domain" description="Cytoplasmic" evidence="2">
    <location>
        <begin position="195"/>
        <end position="198"/>
    </location>
</feature>
<feature type="transmembrane region" description="Helical" evidence="3">
    <location>
        <begin position="199"/>
        <end position="221"/>
    </location>
</feature>
<feature type="topological domain" description="Periplasmic" evidence="2">
    <location>
        <begin position="222"/>
        <end position="224"/>
    </location>
</feature>
<feature type="transmembrane region" description="Helical" evidence="3">
    <location>
        <begin position="225"/>
        <end position="245"/>
    </location>
</feature>
<feature type="topological domain" description="Cytoplasmic" evidence="2">
    <location>
        <begin position="246"/>
        <end position="276"/>
    </location>
</feature>
<feature type="transmembrane region" description="Helical" evidence="3">
    <location>
        <begin position="277"/>
        <end position="297"/>
    </location>
</feature>
<feature type="topological domain" description="Periplasmic" evidence="2">
    <location>
        <begin position="298"/>
        <end position="306"/>
    </location>
</feature>
<feature type="transmembrane region" description="Helical" evidence="3">
    <location>
        <begin position="307"/>
        <end position="327"/>
    </location>
</feature>
<feature type="topological domain" description="Cytoplasmic" evidence="2">
    <location>
        <position position="328"/>
    </location>
</feature>
<feature type="transmembrane region" description="Helical" evidence="3">
    <location>
        <begin position="329"/>
        <end position="349"/>
    </location>
</feature>
<feature type="topological domain" description="Periplasmic" evidence="2 4">
    <location>
        <begin position="350"/>
        <end position="368"/>
    </location>
</feature>
<feature type="domain" description="PTS EIIC type-1" evidence="3">
    <location>
        <begin position="1"/>
        <end position="368"/>
    </location>
</feature>
<comment type="function">
    <text evidence="1 7">The phosphoenolpyruvate-dependent sugar phosphotransferase system (PTS), a major carbohydrate active -transport system, catalyzes the phosphorylation of incoming sugar substrates concomitant with their translocation across the cell membrane. This operon may be cryptic in wild-type K12 strains (Probable).</text>
</comment>
<comment type="subcellular location">
    <subcellularLocation>
        <location evidence="4">Cell inner membrane</location>
        <topology>Multi-pass membrane protein</topology>
    </subcellularLocation>
    <text evidence="4">When overexpressed using vectors that provide a promoter and ribosome binding site (PubMed:15919996).</text>
</comment>
<comment type="domain">
    <text>The EIIC domain forms the PTS system translocation channel and contains the specific substrate-binding site.</text>
</comment>
<comment type="miscellaneous">
    <text evidence="6">Is shorter than orthologs at the C-terminus by about 170 amino acids.</text>
</comment>
<comment type="sequence caution" evidence="7">
    <conflict type="erroneous initiation">
        <sequence resource="EMBL-CDS" id="AAA62035"/>
    </conflict>
    <text>Extended N-terminus.</text>
</comment>
<sequence length="368" mass="39692">MLSQIQRFGGAMFTPVLLFPFAGIVVGLAILLQNPMFVGESLTDPNSLFAQIVHIIEEGGWTVFRNMPLIFAVGLPIGLAKQAQGRACLAVMVSFLTWNYFINAMGMTWGSYFGVDFTQDAVAGSGLTMMAGIKTLDTSIIGAIIISGIVTALHNRLFDKKLPVFLGIFQGTSYVVIIAFLVMIPCAWLTLLGWPKVQMGIESLQAFLRSAGALGVWVYTFLERILIPTGLHHFIYGQFIFGPAAVEGGIQMYWAQHLQEFSLSAEPLKSLFPEGGFALHGNSKIFGAVGISLAMYFTAAPENRVKVAGLLIPATLTAMLVGITEPLEFTFLFISPLLFAVHAVLAASMSTVMYLFGVVGNMGGGLID</sequence>
<gene>
    <name evidence="5" type="primary">glvC</name>
    <name type="synonym">ptiC</name>
    <name type="ordered locus">b3683</name>
    <name type="ordered locus">JW3660</name>
</gene>
<protein>
    <recommendedName>
        <fullName>Phosphotransferase IIC component GlvC</fullName>
    </recommendedName>
    <alternativeName>
        <fullName>PTS system EIIC component</fullName>
    </alternativeName>
</protein>
<accession>P31452</accession>
<accession>A0A385XJP0</accession>
<accession>P76731</accession>
<accession>Q2M7Z5</accession>
<organism>
    <name type="scientific">Escherichia coli (strain K12)</name>
    <dbReference type="NCBI Taxonomy" id="83333"/>
    <lineage>
        <taxon>Bacteria</taxon>
        <taxon>Pseudomonadati</taxon>
        <taxon>Pseudomonadota</taxon>
        <taxon>Gammaproteobacteria</taxon>
        <taxon>Enterobacterales</taxon>
        <taxon>Enterobacteriaceae</taxon>
        <taxon>Escherichia</taxon>
    </lineage>
</organism>
<proteinExistence type="evidence at protein level"/>
<evidence type="ECO:0000250" key="1"/>
<evidence type="ECO:0000255" key="2"/>
<evidence type="ECO:0000255" key="3">
    <source>
        <dbReference type="PROSITE-ProRule" id="PRU00426"/>
    </source>
</evidence>
<evidence type="ECO:0000269" key="4">
    <source>
    </source>
</evidence>
<evidence type="ECO:0000303" key="5">
    <source>
    </source>
</evidence>
<evidence type="ECO:0000305" key="6"/>
<evidence type="ECO:0000305" key="7">
    <source>
    </source>
</evidence>
<keyword id="KW-0997">Cell inner membrane</keyword>
<keyword id="KW-1003">Cell membrane</keyword>
<keyword id="KW-0472">Membrane</keyword>
<keyword id="KW-0598">Phosphotransferase system</keyword>
<keyword id="KW-1185">Reference proteome</keyword>
<keyword id="KW-0762">Sugar transport</keyword>
<keyword id="KW-0812">Transmembrane</keyword>
<keyword id="KW-1133">Transmembrane helix</keyword>
<keyword id="KW-0813">Transport</keyword>
<name>PTXC_ECOLI</name>
<reference key="1">
    <citation type="journal article" date="1993" name="Genomics">
        <title>DNA sequence and analysis of 136 kilobases of the Escherichia coli genome: organizational symmetry around the origin of replication.</title>
        <authorList>
            <person name="Burland V.D."/>
            <person name="Plunkett G. III"/>
            <person name="Daniels D.L."/>
            <person name="Blattner F.R."/>
        </authorList>
    </citation>
    <scope>NUCLEOTIDE SEQUENCE [LARGE SCALE GENOMIC DNA]</scope>
    <source>
        <strain>K12 / MG1655 / ATCC 47076</strain>
    </source>
</reference>
<reference key="2">
    <citation type="journal article" date="1997" name="Science">
        <title>The complete genome sequence of Escherichia coli K-12.</title>
        <authorList>
            <person name="Blattner F.R."/>
            <person name="Plunkett G. III"/>
            <person name="Bloch C.A."/>
            <person name="Perna N.T."/>
            <person name="Burland V."/>
            <person name="Riley M."/>
            <person name="Collado-Vides J."/>
            <person name="Glasner J.D."/>
            <person name="Rode C.K."/>
            <person name="Mayhew G.F."/>
            <person name="Gregor J."/>
            <person name="Davis N.W."/>
            <person name="Kirkpatrick H.A."/>
            <person name="Goeden M.A."/>
            <person name="Rose D.J."/>
            <person name="Mau B."/>
            <person name="Shao Y."/>
        </authorList>
    </citation>
    <scope>NUCLEOTIDE SEQUENCE [LARGE SCALE GENOMIC DNA]</scope>
    <source>
        <strain>K12 / MG1655 / ATCC 47076</strain>
    </source>
</reference>
<reference key="3">
    <citation type="journal article" date="2006" name="Mol. Syst. Biol.">
        <title>Highly accurate genome sequences of Escherichia coli K-12 strains MG1655 and W3110.</title>
        <authorList>
            <person name="Hayashi K."/>
            <person name="Morooka N."/>
            <person name="Yamamoto Y."/>
            <person name="Fujita K."/>
            <person name="Isono K."/>
            <person name="Choi S."/>
            <person name="Ohtsubo E."/>
            <person name="Baba T."/>
            <person name="Wanner B.L."/>
            <person name="Mori H."/>
            <person name="Horiuchi T."/>
        </authorList>
    </citation>
    <scope>NUCLEOTIDE SEQUENCE [LARGE SCALE GENOMIC DNA]</scope>
    <source>
        <strain>K12 / W3110 / ATCC 27325 / DSM 5911</strain>
    </source>
</reference>
<reference key="4">
    <citation type="journal article" date="1994" name="Protein Sci.">
        <title>Novel phosphotransferase system genes revealed by bacterial genome analysis: unique, putative fructose- and glucoside-specific systems.</title>
        <authorList>
            <person name="Reizer J."/>
            <person name="Michotey V."/>
            <person name="Reizer A."/>
            <person name="Saier M.H. Jr."/>
        </authorList>
    </citation>
    <scope>DISCUSSION OF SEQUENCE</scope>
</reference>
<reference key="5">
    <citation type="journal article" date="2005" name="Science">
        <title>Global topology analysis of the Escherichia coli inner membrane proteome.</title>
        <authorList>
            <person name="Daley D.O."/>
            <person name="Rapp M."/>
            <person name="Granseth E."/>
            <person name="Melen K."/>
            <person name="Drew D."/>
            <person name="von Heijne G."/>
        </authorList>
    </citation>
    <scope>SUBCELLULAR LOCATION</scope>
    <scope>TOPOLOGY [LARGE SCALE ANALYSIS]</scope>
    <source>
        <strain>K12 / MG1655 / ATCC 47076</strain>
    </source>
</reference>